<feature type="chain" id="PRO_1000095769" description="Tryptophan synthase beta chain">
    <location>
        <begin position="1"/>
        <end position="408"/>
    </location>
</feature>
<feature type="modified residue" description="N6-(pyridoxal phosphate)lysine" evidence="1">
    <location>
        <position position="103"/>
    </location>
</feature>
<reference key="1">
    <citation type="journal article" date="2009" name="Appl. Environ. Microbiol.">
        <title>Three genomes from the phylum Acidobacteria provide insight into the lifestyles of these microorganisms in soils.</title>
        <authorList>
            <person name="Ward N.L."/>
            <person name="Challacombe J.F."/>
            <person name="Janssen P.H."/>
            <person name="Henrissat B."/>
            <person name="Coutinho P.M."/>
            <person name="Wu M."/>
            <person name="Xie G."/>
            <person name="Haft D.H."/>
            <person name="Sait M."/>
            <person name="Badger J."/>
            <person name="Barabote R.D."/>
            <person name="Bradley B."/>
            <person name="Brettin T.S."/>
            <person name="Brinkac L.M."/>
            <person name="Bruce D."/>
            <person name="Creasy T."/>
            <person name="Daugherty S.C."/>
            <person name="Davidsen T.M."/>
            <person name="DeBoy R.T."/>
            <person name="Detter J.C."/>
            <person name="Dodson R.J."/>
            <person name="Durkin A.S."/>
            <person name="Ganapathy A."/>
            <person name="Gwinn-Giglio M."/>
            <person name="Han C.S."/>
            <person name="Khouri H."/>
            <person name="Kiss H."/>
            <person name="Kothari S.P."/>
            <person name="Madupu R."/>
            <person name="Nelson K.E."/>
            <person name="Nelson W.C."/>
            <person name="Paulsen I."/>
            <person name="Penn K."/>
            <person name="Ren Q."/>
            <person name="Rosovitz M.J."/>
            <person name="Selengut J.D."/>
            <person name="Shrivastava S."/>
            <person name="Sullivan S.A."/>
            <person name="Tapia R."/>
            <person name="Thompson L.S."/>
            <person name="Watkins K.L."/>
            <person name="Yang Q."/>
            <person name="Yu C."/>
            <person name="Zafar N."/>
            <person name="Zhou L."/>
            <person name="Kuske C.R."/>
        </authorList>
    </citation>
    <scope>NUCLEOTIDE SEQUENCE [LARGE SCALE GENOMIC DNA]</scope>
    <source>
        <strain>Ellin345</strain>
    </source>
</reference>
<name>TRPB_KORVE</name>
<protein>
    <recommendedName>
        <fullName evidence="1">Tryptophan synthase beta chain</fullName>
        <ecNumber evidence="1">4.2.1.20</ecNumber>
    </recommendedName>
</protein>
<evidence type="ECO:0000255" key="1">
    <source>
        <dbReference type="HAMAP-Rule" id="MF_00133"/>
    </source>
</evidence>
<dbReference type="EC" id="4.2.1.20" evidence="1"/>
<dbReference type="EMBL" id="CP000360">
    <property type="protein sequence ID" value="ABF40161.1"/>
    <property type="molecule type" value="Genomic_DNA"/>
</dbReference>
<dbReference type="RefSeq" id="WP_011521963.1">
    <property type="nucleotide sequence ID" value="NC_008009.1"/>
</dbReference>
<dbReference type="SMR" id="Q1ISI9"/>
<dbReference type="STRING" id="204669.Acid345_1158"/>
<dbReference type="EnsemblBacteria" id="ABF40161">
    <property type="protein sequence ID" value="ABF40161"/>
    <property type="gene ID" value="Acid345_1158"/>
</dbReference>
<dbReference type="KEGG" id="aba:Acid345_1158"/>
<dbReference type="eggNOG" id="COG0133">
    <property type="taxonomic scope" value="Bacteria"/>
</dbReference>
<dbReference type="HOGENOM" id="CLU_016734_3_1_0"/>
<dbReference type="OrthoDB" id="9766131at2"/>
<dbReference type="UniPathway" id="UPA00035">
    <property type="reaction ID" value="UER00044"/>
</dbReference>
<dbReference type="Proteomes" id="UP000002432">
    <property type="component" value="Chromosome"/>
</dbReference>
<dbReference type="GO" id="GO:0005737">
    <property type="term" value="C:cytoplasm"/>
    <property type="evidence" value="ECO:0007669"/>
    <property type="project" value="TreeGrafter"/>
</dbReference>
<dbReference type="GO" id="GO:0004834">
    <property type="term" value="F:tryptophan synthase activity"/>
    <property type="evidence" value="ECO:0007669"/>
    <property type="project" value="UniProtKB-UniRule"/>
</dbReference>
<dbReference type="CDD" id="cd06446">
    <property type="entry name" value="Trp-synth_B"/>
    <property type="match status" value="1"/>
</dbReference>
<dbReference type="FunFam" id="3.40.50.1100:FF:000001">
    <property type="entry name" value="Tryptophan synthase beta chain"/>
    <property type="match status" value="1"/>
</dbReference>
<dbReference type="FunFam" id="3.40.50.1100:FF:000004">
    <property type="entry name" value="Tryptophan synthase beta chain"/>
    <property type="match status" value="1"/>
</dbReference>
<dbReference type="Gene3D" id="3.40.50.1100">
    <property type="match status" value="2"/>
</dbReference>
<dbReference type="HAMAP" id="MF_00133">
    <property type="entry name" value="Trp_synth_beta"/>
    <property type="match status" value="1"/>
</dbReference>
<dbReference type="InterPro" id="IPR006653">
    <property type="entry name" value="Trp_synth_b_CS"/>
</dbReference>
<dbReference type="InterPro" id="IPR006654">
    <property type="entry name" value="Trp_synth_beta"/>
</dbReference>
<dbReference type="InterPro" id="IPR023026">
    <property type="entry name" value="Trp_synth_beta/beta-like"/>
</dbReference>
<dbReference type="InterPro" id="IPR001926">
    <property type="entry name" value="TrpB-like_PALP"/>
</dbReference>
<dbReference type="InterPro" id="IPR036052">
    <property type="entry name" value="TrpB-like_PALP_sf"/>
</dbReference>
<dbReference type="NCBIfam" id="TIGR00263">
    <property type="entry name" value="trpB"/>
    <property type="match status" value="1"/>
</dbReference>
<dbReference type="PANTHER" id="PTHR48077:SF3">
    <property type="entry name" value="TRYPTOPHAN SYNTHASE"/>
    <property type="match status" value="1"/>
</dbReference>
<dbReference type="PANTHER" id="PTHR48077">
    <property type="entry name" value="TRYPTOPHAN SYNTHASE-RELATED"/>
    <property type="match status" value="1"/>
</dbReference>
<dbReference type="Pfam" id="PF00291">
    <property type="entry name" value="PALP"/>
    <property type="match status" value="1"/>
</dbReference>
<dbReference type="PIRSF" id="PIRSF001413">
    <property type="entry name" value="Trp_syn_beta"/>
    <property type="match status" value="1"/>
</dbReference>
<dbReference type="SUPFAM" id="SSF53686">
    <property type="entry name" value="Tryptophan synthase beta subunit-like PLP-dependent enzymes"/>
    <property type="match status" value="1"/>
</dbReference>
<dbReference type="PROSITE" id="PS00168">
    <property type="entry name" value="TRP_SYNTHASE_BETA"/>
    <property type="match status" value="1"/>
</dbReference>
<proteinExistence type="inferred from homology"/>
<sequence length="408" mass="43928">MATKPIAKVRKSVPKKVESQVGYFGSYGGRFVPETLMAALQELEAAYEAAKRDKKFKEEIESLLREYAGRPTPLFLAKNLTQKLGGAKIYLKREDLLHTGAHKINNCIGQGLLARRMGKHRIIAETGAGQHGVASATVAALFGMECVVYMGSEDVRRQELNVFRMKLLGAEVVSVNSGSRTLKDAINEAMRDWVTNVRTTHYLLGSVLGAHPYPMMVRDFHRVISREAKAQIMKAEGKLPTAIIACVGGGSNAIGAFYEFIGDKKVQLIGVEAGGRGKALGEHAARFRGGAPGVLQGTYSYVLQDEHGQIAGTHSVSAGLDYPAIGPEHAALAEAGRAEYVAASDAEALAACSMLAKTEGIIPALESSHAVAECVRRAPQMRKSDVVIVNISGRGDKDIGILREQLRF</sequence>
<comment type="function">
    <text evidence="1">The beta subunit is responsible for the synthesis of L-tryptophan from indole and L-serine.</text>
</comment>
<comment type="catalytic activity">
    <reaction evidence="1">
        <text>(1S,2R)-1-C-(indol-3-yl)glycerol 3-phosphate + L-serine = D-glyceraldehyde 3-phosphate + L-tryptophan + H2O</text>
        <dbReference type="Rhea" id="RHEA:10532"/>
        <dbReference type="ChEBI" id="CHEBI:15377"/>
        <dbReference type="ChEBI" id="CHEBI:33384"/>
        <dbReference type="ChEBI" id="CHEBI:57912"/>
        <dbReference type="ChEBI" id="CHEBI:58866"/>
        <dbReference type="ChEBI" id="CHEBI:59776"/>
        <dbReference type="EC" id="4.2.1.20"/>
    </reaction>
</comment>
<comment type="cofactor">
    <cofactor evidence="1">
        <name>pyridoxal 5'-phosphate</name>
        <dbReference type="ChEBI" id="CHEBI:597326"/>
    </cofactor>
</comment>
<comment type="pathway">
    <text evidence="1">Amino-acid biosynthesis; L-tryptophan biosynthesis; L-tryptophan from chorismate: step 5/5.</text>
</comment>
<comment type="subunit">
    <text evidence="1">Tetramer of two alpha and two beta chains.</text>
</comment>
<comment type="similarity">
    <text evidence="1">Belongs to the TrpB family.</text>
</comment>
<keyword id="KW-0028">Amino-acid biosynthesis</keyword>
<keyword id="KW-0057">Aromatic amino acid biosynthesis</keyword>
<keyword id="KW-0456">Lyase</keyword>
<keyword id="KW-0663">Pyridoxal phosphate</keyword>
<keyword id="KW-1185">Reference proteome</keyword>
<keyword id="KW-0822">Tryptophan biosynthesis</keyword>
<organism>
    <name type="scientific">Koribacter versatilis (strain Ellin345)</name>
    <dbReference type="NCBI Taxonomy" id="204669"/>
    <lineage>
        <taxon>Bacteria</taxon>
        <taxon>Pseudomonadati</taxon>
        <taxon>Acidobacteriota</taxon>
        <taxon>Terriglobia</taxon>
        <taxon>Terriglobales</taxon>
        <taxon>Candidatus Korobacteraceae</taxon>
        <taxon>Candidatus Korobacter</taxon>
    </lineage>
</organism>
<accession>Q1ISI9</accession>
<gene>
    <name evidence="1" type="primary">trpB</name>
    <name type="ordered locus">Acid345_1158</name>
</gene>